<comment type="similarity">
    <text evidence="3">Belongs to the short-chain dehydrogenases/reductases (SDR) family.</text>
</comment>
<sequence>MERFEGKVAVVTGAGAGIGKACALAIAREGGRVVVADLDGSAAIACTAQIAAEAGNALAMAMDIADAQAVAALFETAERHFGGVDLLVNNASAMHLTPRDRAILDLDLAVWDQTMATNLRGTLLCCRQAIPRMIARGGGAIVNMSSCQGLSGDTAQTSYAVSKAAMNMLSASLATQYGHAQIRCNAVAPGLIMTERLLAKLDKCMQRHLSRHQLLPRVGHPEDVAALVAFLLSDDASFITGQVVCIDGGMLAHMPTYADGGNSCAGRTAGDTAETARC</sequence>
<evidence type="ECO:0000250" key="1"/>
<evidence type="ECO:0000255" key="2">
    <source>
        <dbReference type="PROSITE-ProRule" id="PRU10001"/>
    </source>
</evidence>
<evidence type="ECO:0000305" key="3"/>
<organism>
    <name type="scientific">Sinorhizobium fredii (strain NBRC 101917 / NGR234)</name>
    <dbReference type="NCBI Taxonomy" id="394"/>
    <lineage>
        <taxon>Bacteria</taxon>
        <taxon>Pseudomonadati</taxon>
        <taxon>Pseudomonadota</taxon>
        <taxon>Alphaproteobacteria</taxon>
        <taxon>Hyphomicrobiales</taxon>
        <taxon>Rhizobiaceae</taxon>
        <taxon>Sinorhizobium/Ensifer group</taxon>
        <taxon>Sinorhizobium</taxon>
    </lineage>
</organism>
<geneLocation type="plasmid">
    <name>sym pNGR234a</name>
</geneLocation>
<keyword id="KW-0560">Oxidoreductase</keyword>
<keyword id="KW-0614">Plasmid</keyword>
<keyword id="KW-1185">Reference proteome</keyword>
<accession>P55541</accession>
<name>Y4LA_SINFN</name>
<gene>
    <name type="ordered locus">NGR_a02730</name>
    <name type="ORF">y4lA</name>
</gene>
<reference key="1">
    <citation type="journal article" date="1997" name="Nature">
        <title>Molecular basis of symbiosis between Rhizobium and legumes.</title>
        <authorList>
            <person name="Freiberg C.A."/>
            <person name="Fellay R."/>
            <person name="Bairoch A."/>
            <person name="Broughton W.J."/>
            <person name="Rosenthal A."/>
            <person name="Perret X."/>
        </authorList>
    </citation>
    <scope>NUCLEOTIDE SEQUENCE [LARGE SCALE GENOMIC DNA]</scope>
    <source>
        <strain>NBRC 101917 / NGR234</strain>
    </source>
</reference>
<reference key="2">
    <citation type="journal article" date="2009" name="Appl. Environ. Microbiol.">
        <title>Rhizobium sp. strain NGR234 possesses a remarkable number of secretion systems.</title>
        <authorList>
            <person name="Schmeisser C."/>
            <person name="Liesegang H."/>
            <person name="Krysciak D."/>
            <person name="Bakkou N."/>
            <person name="Le Quere A."/>
            <person name="Wollherr A."/>
            <person name="Heinemeyer I."/>
            <person name="Morgenstern B."/>
            <person name="Pommerening-Roeser A."/>
            <person name="Flores M."/>
            <person name="Palacios R."/>
            <person name="Brenner S."/>
            <person name="Gottschalk G."/>
            <person name="Schmitz R.A."/>
            <person name="Broughton W.J."/>
            <person name="Perret X."/>
            <person name="Strittmatter A.W."/>
            <person name="Streit W.R."/>
        </authorList>
    </citation>
    <scope>NUCLEOTIDE SEQUENCE [LARGE SCALE GENOMIC DNA]</scope>
    <source>
        <strain>NBRC 101917 / NGR234</strain>
    </source>
</reference>
<dbReference type="EC" id="1.-.-.-"/>
<dbReference type="EMBL" id="U00090">
    <property type="protein sequence ID" value="AAB91754.1"/>
    <property type="molecule type" value="Genomic_DNA"/>
</dbReference>
<dbReference type="PIR" id="T10877">
    <property type="entry name" value="T10877"/>
</dbReference>
<dbReference type="RefSeq" id="NP_443952.1">
    <property type="nucleotide sequence ID" value="NC_000914.2"/>
</dbReference>
<dbReference type="RefSeq" id="WP_010875298.1">
    <property type="nucleotide sequence ID" value="NC_000914.2"/>
</dbReference>
<dbReference type="SMR" id="P55541"/>
<dbReference type="KEGG" id="rhi:NGR_a02730"/>
<dbReference type="PATRIC" id="fig|394.7.peg.291"/>
<dbReference type="eggNOG" id="COG1028">
    <property type="taxonomic scope" value="Bacteria"/>
</dbReference>
<dbReference type="HOGENOM" id="CLU_010194_1_0_5"/>
<dbReference type="OrthoDB" id="7064009at2"/>
<dbReference type="Proteomes" id="UP000001054">
    <property type="component" value="Plasmid pNGR234a"/>
</dbReference>
<dbReference type="GO" id="GO:0016491">
    <property type="term" value="F:oxidoreductase activity"/>
    <property type="evidence" value="ECO:0007669"/>
    <property type="project" value="UniProtKB-KW"/>
</dbReference>
<dbReference type="CDD" id="cd08944">
    <property type="entry name" value="SDR_c12"/>
    <property type="match status" value="1"/>
</dbReference>
<dbReference type="FunFam" id="3.40.50.720:FF:000084">
    <property type="entry name" value="Short-chain dehydrogenase reductase"/>
    <property type="match status" value="1"/>
</dbReference>
<dbReference type="Gene3D" id="3.40.50.720">
    <property type="entry name" value="NAD(P)-binding Rossmann-like Domain"/>
    <property type="match status" value="1"/>
</dbReference>
<dbReference type="InterPro" id="IPR036291">
    <property type="entry name" value="NAD(P)-bd_dom_sf"/>
</dbReference>
<dbReference type="InterPro" id="IPR020904">
    <property type="entry name" value="Sc_DH/Rdtase_CS"/>
</dbReference>
<dbReference type="InterPro" id="IPR002347">
    <property type="entry name" value="SDR_fam"/>
</dbReference>
<dbReference type="NCBIfam" id="NF005559">
    <property type="entry name" value="PRK07231.1"/>
    <property type="match status" value="1"/>
</dbReference>
<dbReference type="PANTHER" id="PTHR24321">
    <property type="entry name" value="DEHYDROGENASES, SHORT CHAIN"/>
    <property type="match status" value="1"/>
</dbReference>
<dbReference type="PANTHER" id="PTHR24321:SF14">
    <property type="entry name" value="SHORT-CHAIN TYPE DEHYDROGENASE_REDUCTASE BLR2146-RELATED"/>
    <property type="match status" value="1"/>
</dbReference>
<dbReference type="Pfam" id="PF13561">
    <property type="entry name" value="adh_short_C2"/>
    <property type="match status" value="1"/>
</dbReference>
<dbReference type="PRINTS" id="PR00081">
    <property type="entry name" value="GDHRDH"/>
</dbReference>
<dbReference type="PRINTS" id="PR00080">
    <property type="entry name" value="SDRFAMILY"/>
</dbReference>
<dbReference type="SMART" id="SM00822">
    <property type="entry name" value="PKS_KR"/>
    <property type="match status" value="1"/>
</dbReference>
<dbReference type="SUPFAM" id="SSF51735">
    <property type="entry name" value="NAD(P)-binding Rossmann-fold domains"/>
    <property type="match status" value="1"/>
</dbReference>
<dbReference type="PROSITE" id="PS00061">
    <property type="entry name" value="ADH_SHORT"/>
    <property type="match status" value="1"/>
</dbReference>
<feature type="chain" id="PRO_0000054887" description="Uncharacterized short-chain type dehydrogenase/reductase y4lA">
    <location>
        <begin position="1"/>
        <end position="278"/>
    </location>
</feature>
<feature type="active site" description="Proton acceptor" evidence="2">
    <location>
        <position position="159"/>
    </location>
</feature>
<feature type="binding site" evidence="1">
    <location>
        <begin position="10"/>
        <end position="34"/>
    </location>
    <ligand>
        <name>NADP(+)</name>
        <dbReference type="ChEBI" id="CHEBI:58349"/>
    </ligand>
</feature>
<feature type="binding site" evidence="1">
    <location>
        <position position="146"/>
    </location>
    <ligand>
        <name>substrate</name>
    </ligand>
</feature>
<protein>
    <recommendedName>
        <fullName>Uncharacterized short-chain type dehydrogenase/reductase y4lA</fullName>
        <ecNumber>1.-.-.-</ecNumber>
    </recommendedName>
</protein>
<proteinExistence type="inferred from homology"/>